<feature type="chain" id="PRO_0000068319" description="Protein rep">
    <location>
        <begin position="1"/>
        <end position="229"/>
    </location>
</feature>
<feature type="binding site" evidence="1">
    <location>
        <position position="214"/>
    </location>
    <ligand>
        <name>DNA</name>
        <dbReference type="ChEBI" id="CHEBI:16991"/>
    </ligand>
</feature>
<dbReference type="EMBL" id="V01277">
    <property type="protein sequence ID" value="CAA24585.1"/>
    <property type="status" value="ALT_INIT"/>
    <property type="molecule type" value="Genomic_DNA"/>
</dbReference>
<dbReference type="PIR" id="A04491">
    <property type="entry name" value="QQSAEC"/>
</dbReference>
<dbReference type="RefSeq" id="NP_040435.3">
    <property type="nucleotide sequence ID" value="NC_002013.1"/>
</dbReference>
<dbReference type="GO" id="GO:0003677">
    <property type="term" value="F:DNA binding"/>
    <property type="evidence" value="ECO:0007669"/>
    <property type="project" value="InterPro"/>
</dbReference>
<dbReference type="GO" id="GO:0006260">
    <property type="term" value="P:DNA replication"/>
    <property type="evidence" value="ECO:0007669"/>
    <property type="project" value="UniProtKB-KW"/>
</dbReference>
<dbReference type="InterPro" id="IPR000989">
    <property type="entry name" value="Rep"/>
</dbReference>
<dbReference type="Pfam" id="PF01446">
    <property type="entry name" value="Rep_1"/>
    <property type="match status" value="1"/>
</dbReference>
<name>REPX_STAAU</name>
<reference key="1">
    <citation type="journal article" date="1982" name="J. Bacteriol.">
        <title>Nucleotide sequence and functional map of pC194, a plasmid that specifies inducible chloramphenicol resistance.</title>
        <authorList>
            <person name="Horinouchi S."/>
            <person name="Weisblum B."/>
        </authorList>
    </citation>
    <scope>NUCLEOTIDE SEQUENCE [GENOMIC DNA]</scope>
</reference>
<keyword id="KW-0235">DNA replication</keyword>
<keyword id="KW-0614">Plasmid</keyword>
<organism>
    <name type="scientific">Staphylococcus aureus</name>
    <dbReference type="NCBI Taxonomy" id="1280"/>
    <lineage>
        <taxon>Bacteria</taxon>
        <taxon>Bacillati</taxon>
        <taxon>Bacillota</taxon>
        <taxon>Bacilli</taxon>
        <taxon>Bacillales</taxon>
        <taxon>Staphylococcaceae</taxon>
        <taxon>Staphylococcus</taxon>
    </lineage>
</organism>
<comment type="function">
    <text>Produces a single-strand nick in a specific site of the plasmid, and this nick results in single-strand replication by rolling circle mechanism.</text>
</comment>
<comment type="miscellaneous">
    <text>PC194 is a plasmid that specifies inducible chloramphenicol resistance.</text>
</comment>
<comment type="similarity">
    <text evidence="2">Belongs to the Gram-positive plasmids replication protein type 1 family.</text>
</comment>
<comment type="sequence caution" evidence="2">
    <conflict type="erroneous initiation">
        <sequence resource="EMBL-CDS" id="CAA24585"/>
    </conflict>
</comment>
<proteinExistence type="inferred from homology"/>
<protein>
    <recommendedName>
        <fullName>Protein rep</fullName>
    </recommendedName>
    <alternativeName>
        <fullName>Reading frame A</fullName>
    </alternativeName>
    <alternativeName>
        <fullName>Replication protein</fullName>
    </alternativeName>
</protein>
<sequence length="229" mass="27546">MCYNMEKYTEKKQRNQVFQKFIKRHIGENQMDLVEDCNTFLSFVADKTLEKQKLYKANSCKNRFCPVCAWRKARKDALGLSLMMQYIKQQEKKEFIFLTLTTPNVMSDELENEIKRYNNSFRKLIKRKKVGSVIKGYVRKLEITYNKKRDDYNPHFHVLIAVNKSYFTDKRYYISQQEWLDLWRDVTGISEITQVQVQKIRQNNNKELYEMAKYSGKDSDYLINKSKSL</sequence>
<geneLocation type="plasmid">
    <name>pC194</name>
</geneLocation>
<accession>P03862</accession>
<evidence type="ECO:0000250" key="1"/>
<evidence type="ECO:0000305" key="2"/>